<organismHost>
    <name type="scientific">Homo sapiens</name>
    <name type="common">Human</name>
    <dbReference type="NCBI Taxonomy" id="9606"/>
</organismHost>
<proteinExistence type="predicted"/>
<sequence length="166" mass="18231">MDVARFLNNNAILHDDCLKSPIVCLERLATEFNAWLTSILLSLEIVFFNEAFIISVISLVILQSDWVVMLSNISPMDTVHVPAFVIILSKMLYGIAQKISSPVISPLSINLLRLFLNALFSGEKISVSIISLIVYAEKIPRVSILSKILIGSESQIMVSSPSGDPA</sequence>
<keyword id="KW-1185">Reference proteome</keyword>
<reference key="1">
    <citation type="journal article" date="1990" name="Virology">
        <title>The complete DNA sequence of vaccinia virus.</title>
        <authorList>
            <person name="Goebel S.J."/>
            <person name="Johnson G.P."/>
            <person name="Perkus M.E."/>
            <person name="Davis S.W."/>
            <person name="Winslow J.P."/>
            <person name="Paoletti E."/>
        </authorList>
    </citation>
    <scope>NUCLEOTIDE SEQUENCE [LARGE SCALE GENOMIC DNA]</scope>
</reference>
<reference key="2">
    <citation type="journal article" date="1990" name="Virology">
        <title>Appendix to 'The complete DNA sequence of vaccinia virus'.</title>
        <authorList>
            <person name="Goebel S.J."/>
            <person name="Johnson G.P."/>
            <person name="Perkus M.E."/>
            <person name="Davis S.W."/>
            <person name="Winslow J.P."/>
            <person name="Paoletti E."/>
        </authorList>
    </citation>
    <scope>COMPLETE GENOME</scope>
</reference>
<name>YVAE_VACCC</name>
<feature type="chain" id="PRO_0000099646" description="Uncharacterized 18.2 kDa protein">
    <location>
        <begin position="1"/>
        <end position="166"/>
    </location>
</feature>
<gene>
    <name type="ORF">A ORF E</name>
</gene>
<protein>
    <recommendedName>
        <fullName>Uncharacterized 18.2 kDa protein</fullName>
    </recommendedName>
</protein>
<dbReference type="EMBL" id="M35027">
    <property type="protein sequence ID" value="AAA48130.1"/>
    <property type="molecule type" value="Genomic_DNA"/>
</dbReference>
<dbReference type="PIR" id="A42524">
    <property type="entry name" value="A42524"/>
</dbReference>
<dbReference type="Proteomes" id="UP000008269">
    <property type="component" value="Segment"/>
</dbReference>
<accession>P20514</accession>
<organism>
    <name type="scientific">Vaccinia virus (strain Copenhagen)</name>
    <name type="common">VACV</name>
    <dbReference type="NCBI Taxonomy" id="10249"/>
    <lineage>
        <taxon>Viruses</taxon>
        <taxon>Varidnaviria</taxon>
        <taxon>Bamfordvirae</taxon>
        <taxon>Nucleocytoviricota</taxon>
        <taxon>Pokkesviricetes</taxon>
        <taxon>Chitovirales</taxon>
        <taxon>Poxviridae</taxon>
        <taxon>Chordopoxvirinae</taxon>
        <taxon>Orthopoxvirus</taxon>
        <taxon>Vaccinia virus</taxon>
    </lineage>
</organism>